<gene>
    <name evidence="1" type="primary">mrdA</name>
    <name type="synonym">pbpA</name>
    <name type="ordered locus">c0726</name>
</gene>
<reference key="1">
    <citation type="journal article" date="2002" name="Proc. Natl. Acad. Sci. U.S.A.">
        <title>Extensive mosaic structure revealed by the complete genome sequence of uropathogenic Escherichia coli.</title>
        <authorList>
            <person name="Welch R.A."/>
            <person name="Burland V."/>
            <person name="Plunkett G. III"/>
            <person name="Redford P."/>
            <person name="Roesch P."/>
            <person name="Rasko D."/>
            <person name="Buckles E.L."/>
            <person name="Liou S.-R."/>
            <person name="Boutin A."/>
            <person name="Hackett J."/>
            <person name="Stroud D."/>
            <person name="Mayhew G.F."/>
            <person name="Rose D.J."/>
            <person name="Zhou S."/>
            <person name="Schwartz D.C."/>
            <person name="Perna N.T."/>
            <person name="Mobley H.L.T."/>
            <person name="Donnenberg M.S."/>
            <person name="Blattner F.R."/>
        </authorList>
    </citation>
    <scope>NUCLEOTIDE SEQUENCE [LARGE SCALE GENOMIC DNA]</scope>
    <source>
        <strain>CFT073 / ATCC 700928 / UPEC</strain>
    </source>
</reference>
<comment type="function">
    <text evidence="1">Catalyzes cross-linking of the peptidoglycan cell wall.</text>
</comment>
<comment type="catalytic activity">
    <reaction evidence="1">
        <text>Preferential cleavage: (Ac)2-L-Lys-D-Ala-|-D-Ala. Also transpeptidation of peptidyl-alanyl moieties that are N-acyl substituents of D-alanine.</text>
        <dbReference type="EC" id="3.4.16.4"/>
    </reaction>
</comment>
<comment type="pathway">
    <text evidence="1">Cell wall biogenesis; peptidoglycan biosynthesis.</text>
</comment>
<comment type="subcellular location">
    <subcellularLocation>
        <location evidence="1">Cell inner membrane</location>
        <topology evidence="1">Single-pass membrane protein</topology>
    </subcellularLocation>
</comment>
<comment type="similarity">
    <text evidence="1">Belongs to the transpeptidase family. MrdA subfamily.</text>
</comment>
<sequence>MKLQNSFRDYTAESALFVRRALVAFLGILLLTGVLIANLYNLQIVRFTDYQTRSNENRIKLVPIAPSRGIIYDRNGIPLALNRTIYQIEMMPEKVDNVQQTLDALRSVVDLTDDDIAAFRKERARSHRFTSIPVKTNLTEVQVARFAVNQYRFPGVEVKGYKRRYYPYGSALTHVIGYVSKINDKDVERLNNDGKLANYAATHDIGKLGIERYYEDVLHGQTGYEEVEVNNRGRVIRQLKEVPPQAGHDIYLTLDLKLQQYIETLLAGSRAAVVVTDPRTGGVLALVSTPSYDPNLFVDGISSKDYSALLNDPNTPLVNRATQGVYPPASTVKPYVAVSALSAGVITRNTTLFDPGWWQLPGSEKRYRDWKKWGHGRLNVTRSLEESADTFFYQVAYDMGIDRLSEWMGKFGYGHYTGIDLAEERSGNMPTREWKQKRFKKPWYQGDTIPVGIGQGYWTATPIQMSKALMILINDGIVKVPHLLMSTAEDGKQVPWVQPHEPPVGDIHSGYWELAKDGMYGVANRPNGTAHKYFASAPYKIAAKSGTAQVFGLKANETYNAHKIAERLRDHKLMTAFAPYNNPQVAVAMILENGGAGPAVGTLMRQILDHIMLGDNNTDLPAENPAVAAAEDH</sequence>
<accession>P0AD66</accession>
<accession>P08150</accession>
<protein>
    <recommendedName>
        <fullName evidence="1">Peptidoglycan D,D-transpeptidase MrdA</fullName>
        <ecNumber evidence="1">3.4.16.4</ecNumber>
    </recommendedName>
    <alternativeName>
        <fullName evidence="1">Penicillin-binding protein 2</fullName>
        <shortName evidence="1">PBP-2</shortName>
    </alternativeName>
</protein>
<feature type="chain" id="PRO_0000195446" description="Peptidoglycan D,D-transpeptidase MrdA">
    <location>
        <begin position="1"/>
        <end position="633"/>
    </location>
</feature>
<feature type="transmembrane region" description="Helical" evidence="1">
    <location>
        <begin position="22"/>
        <end position="42"/>
    </location>
</feature>
<feature type="active site" description="Acyl-ester intermediate" evidence="1">
    <location>
        <position position="330"/>
    </location>
</feature>
<proteinExistence type="inferred from homology"/>
<evidence type="ECO:0000255" key="1">
    <source>
        <dbReference type="HAMAP-Rule" id="MF_02081"/>
    </source>
</evidence>
<name>MRDA_ECOL6</name>
<keyword id="KW-0121">Carboxypeptidase</keyword>
<keyword id="KW-0997">Cell inner membrane</keyword>
<keyword id="KW-1003">Cell membrane</keyword>
<keyword id="KW-0133">Cell shape</keyword>
<keyword id="KW-0961">Cell wall biogenesis/degradation</keyword>
<keyword id="KW-0378">Hydrolase</keyword>
<keyword id="KW-0472">Membrane</keyword>
<keyword id="KW-0573">Peptidoglycan synthesis</keyword>
<keyword id="KW-0645">Protease</keyword>
<keyword id="KW-1185">Reference proteome</keyword>
<keyword id="KW-0812">Transmembrane</keyword>
<keyword id="KW-1133">Transmembrane helix</keyword>
<dbReference type="EC" id="3.4.16.4" evidence="1"/>
<dbReference type="EMBL" id="AE014075">
    <property type="protein sequence ID" value="AAN79199.1"/>
    <property type="molecule type" value="Genomic_DNA"/>
</dbReference>
<dbReference type="RefSeq" id="WP_000776191.1">
    <property type="nucleotide sequence ID" value="NZ_CP051263.1"/>
</dbReference>
<dbReference type="SMR" id="P0AD66"/>
<dbReference type="STRING" id="199310.c0726"/>
<dbReference type="GeneID" id="75205004"/>
<dbReference type="KEGG" id="ecc:c0726"/>
<dbReference type="eggNOG" id="COG0768">
    <property type="taxonomic scope" value="Bacteria"/>
</dbReference>
<dbReference type="HOGENOM" id="CLU_009289_1_2_6"/>
<dbReference type="BioCyc" id="ECOL199310:C0726-MONOMER"/>
<dbReference type="UniPathway" id="UPA00219"/>
<dbReference type="Proteomes" id="UP000001410">
    <property type="component" value="Chromosome"/>
</dbReference>
<dbReference type="GO" id="GO:0005886">
    <property type="term" value="C:plasma membrane"/>
    <property type="evidence" value="ECO:0007669"/>
    <property type="project" value="UniProtKB-SubCell"/>
</dbReference>
<dbReference type="GO" id="GO:0008658">
    <property type="term" value="F:penicillin binding"/>
    <property type="evidence" value="ECO:0007669"/>
    <property type="project" value="InterPro"/>
</dbReference>
<dbReference type="GO" id="GO:0071972">
    <property type="term" value="F:peptidoglycan L,D-transpeptidase activity"/>
    <property type="evidence" value="ECO:0007669"/>
    <property type="project" value="TreeGrafter"/>
</dbReference>
<dbReference type="GO" id="GO:0009002">
    <property type="term" value="F:serine-type D-Ala-D-Ala carboxypeptidase activity"/>
    <property type="evidence" value="ECO:0007669"/>
    <property type="project" value="UniProtKB-UniRule"/>
</dbReference>
<dbReference type="GO" id="GO:0071555">
    <property type="term" value="P:cell wall organization"/>
    <property type="evidence" value="ECO:0007669"/>
    <property type="project" value="UniProtKB-KW"/>
</dbReference>
<dbReference type="GO" id="GO:0009252">
    <property type="term" value="P:peptidoglycan biosynthetic process"/>
    <property type="evidence" value="ECO:0007669"/>
    <property type="project" value="UniProtKB-UniRule"/>
</dbReference>
<dbReference type="GO" id="GO:0006508">
    <property type="term" value="P:proteolysis"/>
    <property type="evidence" value="ECO:0007669"/>
    <property type="project" value="UniProtKB-KW"/>
</dbReference>
<dbReference type="GO" id="GO:0008360">
    <property type="term" value="P:regulation of cell shape"/>
    <property type="evidence" value="ECO:0007669"/>
    <property type="project" value="UniProtKB-KW"/>
</dbReference>
<dbReference type="FunFam" id="3.30.1390.30:FF:000001">
    <property type="entry name" value="Peptidoglycan D,D-transpeptidase MrdA"/>
    <property type="match status" value="1"/>
</dbReference>
<dbReference type="FunFam" id="3.40.710.10:FF:000004">
    <property type="entry name" value="Peptidoglycan D,D-transpeptidase MrdA"/>
    <property type="match status" value="1"/>
</dbReference>
<dbReference type="FunFam" id="3.90.1310.10:FF:000001">
    <property type="entry name" value="Peptidoglycan D,D-transpeptidase MrdA"/>
    <property type="match status" value="1"/>
</dbReference>
<dbReference type="Gene3D" id="3.40.710.10">
    <property type="entry name" value="DD-peptidase/beta-lactamase superfamily"/>
    <property type="match status" value="1"/>
</dbReference>
<dbReference type="Gene3D" id="3.90.1310.10">
    <property type="entry name" value="Penicillin-binding protein 2a (Domain 2)"/>
    <property type="match status" value="1"/>
</dbReference>
<dbReference type="Gene3D" id="3.30.1390.30">
    <property type="entry name" value="Penicillin-binding protein 2a, domain 3"/>
    <property type="match status" value="1"/>
</dbReference>
<dbReference type="HAMAP" id="MF_02081">
    <property type="entry name" value="MrdA_transpept"/>
    <property type="match status" value="1"/>
</dbReference>
<dbReference type="InterPro" id="IPR050515">
    <property type="entry name" value="Bact_Transpept/Beta-Lactamase"/>
</dbReference>
<dbReference type="InterPro" id="IPR012338">
    <property type="entry name" value="Beta-lactam/transpept-like"/>
</dbReference>
<dbReference type="InterPro" id="IPR005311">
    <property type="entry name" value="PBP_dimer"/>
</dbReference>
<dbReference type="InterPro" id="IPR036138">
    <property type="entry name" value="PBP_dimer_sf"/>
</dbReference>
<dbReference type="InterPro" id="IPR001460">
    <property type="entry name" value="PCN-bd_Tpept"/>
</dbReference>
<dbReference type="InterPro" id="IPR017790">
    <property type="entry name" value="Penicillin-binding_protein_2"/>
</dbReference>
<dbReference type="NCBIfam" id="TIGR03423">
    <property type="entry name" value="pbp2_mrdA"/>
    <property type="match status" value="1"/>
</dbReference>
<dbReference type="NCBIfam" id="NF008061">
    <property type="entry name" value="PRK10795.1"/>
    <property type="match status" value="1"/>
</dbReference>
<dbReference type="PANTHER" id="PTHR30627">
    <property type="entry name" value="PEPTIDOGLYCAN D,D-TRANSPEPTIDASE"/>
    <property type="match status" value="1"/>
</dbReference>
<dbReference type="PANTHER" id="PTHR30627:SF2">
    <property type="entry name" value="PEPTIDOGLYCAN D,D-TRANSPEPTIDASE MRDA"/>
    <property type="match status" value="1"/>
</dbReference>
<dbReference type="Pfam" id="PF03717">
    <property type="entry name" value="PBP_dimer"/>
    <property type="match status" value="1"/>
</dbReference>
<dbReference type="Pfam" id="PF00905">
    <property type="entry name" value="Transpeptidase"/>
    <property type="match status" value="1"/>
</dbReference>
<dbReference type="SUPFAM" id="SSF56601">
    <property type="entry name" value="beta-lactamase/transpeptidase-like"/>
    <property type="match status" value="1"/>
</dbReference>
<dbReference type="SUPFAM" id="SSF56519">
    <property type="entry name" value="Penicillin binding protein dimerisation domain"/>
    <property type="match status" value="1"/>
</dbReference>
<organism>
    <name type="scientific">Escherichia coli O6:H1 (strain CFT073 / ATCC 700928 / UPEC)</name>
    <dbReference type="NCBI Taxonomy" id="199310"/>
    <lineage>
        <taxon>Bacteria</taxon>
        <taxon>Pseudomonadati</taxon>
        <taxon>Pseudomonadota</taxon>
        <taxon>Gammaproteobacteria</taxon>
        <taxon>Enterobacterales</taxon>
        <taxon>Enterobacteriaceae</taxon>
        <taxon>Escherichia</taxon>
    </lineage>
</organism>